<feature type="chain" id="PRO_0000071653" description="Glutamyl aminopeptidase">
    <location>
        <begin position="1"/>
        <end position="355"/>
    </location>
</feature>
<feature type="active site" description="Proton acceptor" evidence="1">
    <location>
        <position position="213"/>
    </location>
</feature>
<feature type="binding site" evidence="1">
    <location>
        <position position="65"/>
    </location>
    <ligand>
        <name>a divalent metal cation</name>
        <dbReference type="ChEBI" id="CHEBI:60240"/>
        <label>1</label>
    </ligand>
</feature>
<feature type="binding site" evidence="1">
    <location>
        <position position="181"/>
    </location>
    <ligand>
        <name>a divalent metal cation</name>
        <dbReference type="ChEBI" id="CHEBI:60240"/>
        <label>1</label>
    </ligand>
</feature>
<feature type="binding site" evidence="1">
    <location>
        <position position="181"/>
    </location>
    <ligand>
        <name>a divalent metal cation</name>
        <dbReference type="ChEBI" id="CHEBI:60240"/>
        <label>2</label>
    </ligand>
</feature>
<feature type="binding site" evidence="1">
    <location>
        <position position="214"/>
    </location>
    <ligand>
        <name>a divalent metal cation</name>
        <dbReference type="ChEBI" id="CHEBI:60240"/>
        <label>2</label>
    </ligand>
</feature>
<feature type="binding site" evidence="1">
    <location>
        <position position="236"/>
    </location>
    <ligand>
        <name>a divalent metal cation</name>
        <dbReference type="ChEBI" id="CHEBI:60240"/>
        <label>1</label>
    </ligand>
</feature>
<feature type="binding site" evidence="1">
    <location>
        <position position="319"/>
    </location>
    <ligand>
        <name>a divalent metal cation</name>
        <dbReference type="ChEBI" id="CHEBI:60240"/>
        <label>2</label>
    </ligand>
</feature>
<comment type="catalytic activity">
    <reaction>
        <text>Release of N-terminal glutamate (and to a lesser extent aspartate) from a peptide.</text>
        <dbReference type="EC" id="3.4.11.7"/>
    </reaction>
</comment>
<comment type="cofactor">
    <cofactor evidence="1">
        <name>a divalent metal cation</name>
        <dbReference type="ChEBI" id="CHEBI:60240"/>
    </cofactor>
    <text evidence="1">Binds 2 divalent metal cations per subunit.</text>
</comment>
<comment type="similarity">
    <text evidence="2">Belongs to the peptidase M42 family.</text>
</comment>
<gene>
    <name type="primary">pepA</name>
    <name type="ordered locus">llmg_0403</name>
</gene>
<evidence type="ECO:0000250" key="1"/>
<evidence type="ECO:0000305" key="2"/>
<keyword id="KW-0031">Aminopeptidase</keyword>
<keyword id="KW-0903">Direct protein sequencing</keyword>
<keyword id="KW-0378">Hydrolase</keyword>
<keyword id="KW-0479">Metal-binding</keyword>
<keyword id="KW-0645">Protease</keyword>
<reference key="1">
    <citation type="journal article" date="1995" name="Microbiology">
        <title>A non-essential glutamyl aminopeptidase is required for optimal growth of Lactococcus lactis MG1363 in milk.</title>
        <authorList>
            <person name="L'Anson K.J.A."/>
            <person name="Movahedi S."/>
            <person name="Griffin H.G."/>
            <person name="Gasson M.J."/>
            <person name="Mulholland F."/>
        </authorList>
    </citation>
    <scope>NUCLEOTIDE SEQUENCE [GENOMIC DNA]</scope>
    <scope>PARTIAL PROTEIN SEQUENCE</scope>
</reference>
<reference key="2">
    <citation type="journal article" date="2007" name="J. Bacteriol.">
        <title>The complete genome sequence of the lactic acid bacterial paradigm Lactococcus lactis subsp. cremoris MG1363.</title>
        <authorList>
            <person name="Wegmann U."/>
            <person name="O'Connell-Motherway M."/>
            <person name="Zomer A."/>
            <person name="Buist G."/>
            <person name="Shearman C."/>
            <person name="Canchaya C."/>
            <person name="Ventura M."/>
            <person name="Goesmann A."/>
            <person name="Gasson M.J."/>
            <person name="Kuipers O.P."/>
            <person name="van Sinderen D."/>
            <person name="Kok J."/>
        </authorList>
    </citation>
    <scope>NUCLEOTIDE SEQUENCE [LARGE SCALE GENOMIC DNA]</scope>
    <source>
        <strain>MG1363</strain>
    </source>
</reference>
<proteinExistence type="evidence at protein level"/>
<sequence>MELFDKVKALTEIQATSGFEGPVRDYLKARMVELGYQPEFDGLGGIFVTKASKVENAPRIMVAAHMDEVGFMVSSIKADGTFRVVPLGGWNPLVVSGQRFTLFTRTGKKIPVVTGGLPPHLLRGTGVTPQIPAISDIIFDGAFENAAEAAEFGIAQGDLIIPETETILSANGKNIISKAWDNRYGCLMILELLEFLADKELPVTLIIGANVQEEVGLRGAKVSTTKFNPDLFFAVDCSPASDTFGDDNGRLGEGTTLRFFDPGHIMLPGMKNFLLDTANHAKVKTQVYMAKGGTDAGAAHLANGGVPSTTIGVVARYIHSHQTIFNIDDFLQAQTFLRAIITSLNTEKVAEIKNY</sequence>
<organism>
    <name type="scientific">Lactococcus lactis subsp. cremoris (strain MG1363)</name>
    <dbReference type="NCBI Taxonomy" id="416870"/>
    <lineage>
        <taxon>Bacteria</taxon>
        <taxon>Bacillati</taxon>
        <taxon>Bacillota</taxon>
        <taxon>Bacilli</taxon>
        <taxon>Lactobacillales</taxon>
        <taxon>Streptococcaceae</taxon>
        <taxon>Lactococcus</taxon>
        <taxon>Lactococcus cremoris subsp. cremoris</taxon>
    </lineage>
</organism>
<protein>
    <recommendedName>
        <fullName>Glutamyl aminopeptidase</fullName>
        <ecNumber>3.4.11.7</ecNumber>
    </recommendedName>
</protein>
<accession>Q48677</accession>
<accession>A2RIB3</accession>
<dbReference type="EC" id="3.4.11.7"/>
<dbReference type="EMBL" id="X81089">
    <property type="protein sequence ID" value="CAA56994.1"/>
    <property type="molecule type" value="Genomic_DNA"/>
</dbReference>
<dbReference type="EMBL" id="AM406671">
    <property type="protein sequence ID" value="CAL97008.1"/>
    <property type="molecule type" value="Genomic_DNA"/>
</dbReference>
<dbReference type="RefSeq" id="WP_011834455.1">
    <property type="nucleotide sequence ID" value="NC_009004.1"/>
</dbReference>
<dbReference type="SMR" id="Q48677"/>
<dbReference type="STRING" id="416870.llmg_0403"/>
<dbReference type="MEROPS" id="M42.001"/>
<dbReference type="KEGG" id="llm:llmg_0403"/>
<dbReference type="eggNOG" id="COG1363">
    <property type="taxonomic scope" value="Bacteria"/>
</dbReference>
<dbReference type="HOGENOM" id="CLU_047249_0_2_9"/>
<dbReference type="OrthoDB" id="9772053at2"/>
<dbReference type="PhylomeDB" id="Q48677"/>
<dbReference type="Proteomes" id="UP000000364">
    <property type="component" value="Chromosome"/>
</dbReference>
<dbReference type="GO" id="GO:0004230">
    <property type="term" value="F:glutamyl aminopeptidase activity"/>
    <property type="evidence" value="ECO:0007669"/>
    <property type="project" value="UniProtKB-EC"/>
</dbReference>
<dbReference type="GO" id="GO:0046872">
    <property type="term" value="F:metal ion binding"/>
    <property type="evidence" value="ECO:0007669"/>
    <property type="project" value="UniProtKB-KW"/>
</dbReference>
<dbReference type="GO" id="GO:0006508">
    <property type="term" value="P:proteolysis"/>
    <property type="evidence" value="ECO:0007669"/>
    <property type="project" value="UniProtKB-KW"/>
</dbReference>
<dbReference type="CDD" id="cd05656">
    <property type="entry name" value="M42_Frv"/>
    <property type="match status" value="1"/>
</dbReference>
<dbReference type="Gene3D" id="2.40.30.40">
    <property type="entry name" value="Peptidase M42, domain 2"/>
    <property type="match status" value="1"/>
</dbReference>
<dbReference type="Gene3D" id="3.40.630.10">
    <property type="entry name" value="Zn peptidases"/>
    <property type="match status" value="1"/>
</dbReference>
<dbReference type="InterPro" id="IPR017538">
    <property type="entry name" value="Pept_M42_glutamyl_aminopept"/>
</dbReference>
<dbReference type="InterPro" id="IPR008007">
    <property type="entry name" value="Peptidase_M42"/>
</dbReference>
<dbReference type="InterPro" id="IPR051464">
    <property type="entry name" value="Peptidase_M42_aminopept"/>
</dbReference>
<dbReference type="InterPro" id="IPR023367">
    <property type="entry name" value="Peptidase_M42_dom2"/>
</dbReference>
<dbReference type="NCBIfam" id="TIGR03107">
    <property type="entry name" value="glu_aminopep"/>
    <property type="match status" value="1"/>
</dbReference>
<dbReference type="PANTHER" id="PTHR32481">
    <property type="entry name" value="AMINOPEPTIDASE"/>
    <property type="match status" value="1"/>
</dbReference>
<dbReference type="PANTHER" id="PTHR32481:SF0">
    <property type="entry name" value="AMINOPEPTIDASE YPDE-RELATED"/>
    <property type="match status" value="1"/>
</dbReference>
<dbReference type="Pfam" id="PF05343">
    <property type="entry name" value="Peptidase_M42"/>
    <property type="match status" value="1"/>
</dbReference>
<dbReference type="PIRSF" id="PIRSF001123">
    <property type="entry name" value="PepA_GA"/>
    <property type="match status" value="1"/>
</dbReference>
<dbReference type="SUPFAM" id="SSF101821">
    <property type="entry name" value="Aminopeptidase/glucanase lid domain"/>
    <property type="match status" value="1"/>
</dbReference>
<dbReference type="SUPFAM" id="SSF53187">
    <property type="entry name" value="Zn-dependent exopeptidases"/>
    <property type="match status" value="1"/>
</dbReference>
<name>PEPA_LACLM</name>